<reference evidence="4" key="1">
    <citation type="journal article" date="1999" name="Nature">
        <title>Sequence and analysis of chromosome 4 of the plant Arabidopsis thaliana.</title>
        <authorList>
            <person name="Mayer K.F.X."/>
            <person name="Schueller C."/>
            <person name="Wambutt R."/>
            <person name="Murphy G."/>
            <person name="Volckaert G."/>
            <person name="Pohl T."/>
            <person name="Duesterhoeft A."/>
            <person name="Stiekema W."/>
            <person name="Entian K.-D."/>
            <person name="Terryn N."/>
            <person name="Harris B."/>
            <person name="Ansorge W."/>
            <person name="Brandt P."/>
            <person name="Grivell L.A."/>
            <person name="Rieger M."/>
            <person name="Weichselgartner M."/>
            <person name="de Simone V."/>
            <person name="Obermaier B."/>
            <person name="Mache R."/>
            <person name="Mueller M."/>
            <person name="Kreis M."/>
            <person name="Delseny M."/>
            <person name="Puigdomenech P."/>
            <person name="Watson M."/>
            <person name="Schmidtheini T."/>
            <person name="Reichert B."/>
            <person name="Portetelle D."/>
            <person name="Perez-Alonso M."/>
            <person name="Boutry M."/>
            <person name="Bancroft I."/>
            <person name="Vos P."/>
            <person name="Hoheisel J."/>
            <person name="Zimmermann W."/>
            <person name="Wedler H."/>
            <person name="Ridley P."/>
            <person name="Langham S.-A."/>
            <person name="McCullagh B."/>
            <person name="Bilham L."/>
            <person name="Robben J."/>
            <person name="van der Schueren J."/>
            <person name="Grymonprez B."/>
            <person name="Chuang Y.-J."/>
            <person name="Vandenbussche F."/>
            <person name="Braeken M."/>
            <person name="Weltjens I."/>
            <person name="Voet M."/>
            <person name="Bastiaens I."/>
            <person name="Aert R."/>
            <person name="Defoor E."/>
            <person name="Weitzenegger T."/>
            <person name="Bothe G."/>
            <person name="Ramsperger U."/>
            <person name="Hilbert H."/>
            <person name="Braun M."/>
            <person name="Holzer E."/>
            <person name="Brandt A."/>
            <person name="Peters S."/>
            <person name="van Staveren M."/>
            <person name="Dirkse W."/>
            <person name="Mooijman P."/>
            <person name="Klein Lankhorst R."/>
            <person name="Rose M."/>
            <person name="Hauf J."/>
            <person name="Koetter P."/>
            <person name="Berneiser S."/>
            <person name="Hempel S."/>
            <person name="Feldpausch M."/>
            <person name="Lamberth S."/>
            <person name="Van den Daele H."/>
            <person name="De Keyser A."/>
            <person name="Buysshaert C."/>
            <person name="Gielen J."/>
            <person name="Villarroel R."/>
            <person name="De Clercq R."/>
            <person name="van Montagu M."/>
            <person name="Rogers J."/>
            <person name="Cronin A."/>
            <person name="Quail M.A."/>
            <person name="Bray-Allen S."/>
            <person name="Clark L."/>
            <person name="Doggett J."/>
            <person name="Hall S."/>
            <person name="Kay M."/>
            <person name="Lennard N."/>
            <person name="McLay K."/>
            <person name="Mayes R."/>
            <person name="Pettett A."/>
            <person name="Rajandream M.A."/>
            <person name="Lyne M."/>
            <person name="Benes V."/>
            <person name="Rechmann S."/>
            <person name="Borkova D."/>
            <person name="Bloecker H."/>
            <person name="Scharfe M."/>
            <person name="Grimm M."/>
            <person name="Loehnert T.-H."/>
            <person name="Dose S."/>
            <person name="de Haan M."/>
            <person name="Maarse A.C."/>
            <person name="Schaefer M."/>
            <person name="Mueller-Auer S."/>
            <person name="Gabel C."/>
            <person name="Fuchs M."/>
            <person name="Fartmann B."/>
            <person name="Granderath K."/>
            <person name="Dauner D."/>
            <person name="Herzl A."/>
            <person name="Neumann S."/>
            <person name="Argiriou A."/>
            <person name="Vitale D."/>
            <person name="Liguori R."/>
            <person name="Piravandi E."/>
            <person name="Massenet O."/>
            <person name="Quigley F."/>
            <person name="Clabauld G."/>
            <person name="Muendlein A."/>
            <person name="Felber R."/>
            <person name="Schnabl S."/>
            <person name="Hiller R."/>
            <person name="Schmidt W."/>
            <person name="Lecharny A."/>
            <person name="Aubourg S."/>
            <person name="Chefdor F."/>
            <person name="Cooke R."/>
            <person name="Berger C."/>
            <person name="Monfort A."/>
            <person name="Casacuberta E."/>
            <person name="Gibbons T."/>
            <person name="Weber N."/>
            <person name="Vandenbol M."/>
            <person name="Bargues M."/>
            <person name="Terol J."/>
            <person name="Torres A."/>
            <person name="Perez-Perez A."/>
            <person name="Purnelle B."/>
            <person name="Bent E."/>
            <person name="Johnson S."/>
            <person name="Tacon D."/>
            <person name="Jesse T."/>
            <person name="Heijnen L."/>
            <person name="Schwarz S."/>
            <person name="Scholler P."/>
            <person name="Heber S."/>
            <person name="Francs P."/>
            <person name="Bielke C."/>
            <person name="Frishman D."/>
            <person name="Haase D."/>
            <person name="Lemcke K."/>
            <person name="Mewes H.-W."/>
            <person name="Stocker S."/>
            <person name="Zaccaria P."/>
            <person name="Bevan M."/>
            <person name="Wilson R.K."/>
            <person name="de la Bastide M."/>
            <person name="Habermann K."/>
            <person name="Parnell L."/>
            <person name="Dedhia N."/>
            <person name="Gnoj L."/>
            <person name="Schutz K."/>
            <person name="Huang E."/>
            <person name="Spiegel L."/>
            <person name="Sekhon M."/>
            <person name="Murray J."/>
            <person name="Sheet P."/>
            <person name="Cordes M."/>
            <person name="Abu-Threideh J."/>
            <person name="Stoneking T."/>
            <person name="Kalicki J."/>
            <person name="Graves T."/>
            <person name="Harmon G."/>
            <person name="Edwards J."/>
            <person name="Latreille P."/>
            <person name="Courtney L."/>
            <person name="Cloud J."/>
            <person name="Abbott A."/>
            <person name="Scott K."/>
            <person name="Johnson D."/>
            <person name="Minx P."/>
            <person name="Bentley D."/>
            <person name="Fulton B."/>
            <person name="Miller N."/>
            <person name="Greco T."/>
            <person name="Kemp K."/>
            <person name="Kramer J."/>
            <person name="Fulton L."/>
            <person name="Mardis E."/>
            <person name="Dante M."/>
            <person name="Pepin K."/>
            <person name="Hillier L.W."/>
            <person name="Nelson J."/>
            <person name="Spieth J."/>
            <person name="Ryan E."/>
            <person name="Andrews S."/>
            <person name="Geisel C."/>
            <person name="Layman D."/>
            <person name="Du H."/>
            <person name="Ali J."/>
            <person name="Berghoff A."/>
            <person name="Jones K."/>
            <person name="Drone K."/>
            <person name="Cotton M."/>
            <person name="Joshu C."/>
            <person name="Antonoiu B."/>
            <person name="Zidanic M."/>
            <person name="Strong C."/>
            <person name="Sun H."/>
            <person name="Lamar B."/>
            <person name="Yordan C."/>
            <person name="Ma P."/>
            <person name="Zhong J."/>
            <person name="Preston R."/>
            <person name="Vil D."/>
            <person name="Shekher M."/>
            <person name="Matero A."/>
            <person name="Shah R."/>
            <person name="Swaby I.K."/>
            <person name="O'Shaughnessy A."/>
            <person name="Rodriguez M."/>
            <person name="Hoffman J."/>
            <person name="Till S."/>
            <person name="Granat S."/>
            <person name="Shohdy N."/>
            <person name="Hasegawa A."/>
            <person name="Hameed A."/>
            <person name="Lodhi M."/>
            <person name="Johnson A."/>
            <person name="Chen E."/>
            <person name="Marra M.A."/>
            <person name="Martienssen R."/>
            <person name="McCombie W.R."/>
        </authorList>
    </citation>
    <scope>NUCLEOTIDE SEQUENCE [LARGE SCALE GENOMIC DNA]</scope>
    <source>
        <strain>cv. Columbia</strain>
    </source>
</reference>
<reference key="2">
    <citation type="journal article" date="2017" name="Plant J.">
        <title>Araport11: a complete reannotation of the Arabidopsis thaliana reference genome.</title>
        <authorList>
            <person name="Cheng C.Y."/>
            <person name="Krishnakumar V."/>
            <person name="Chan A.P."/>
            <person name="Thibaud-Nissen F."/>
            <person name="Schobel S."/>
            <person name="Town C.D."/>
        </authorList>
    </citation>
    <scope>GENOME REANNOTATION</scope>
    <source>
        <strain>cv. Columbia</strain>
    </source>
</reference>
<reference evidence="4" key="3">
    <citation type="journal article" date="2001" name="Plant Mol. Biol.">
        <title>Two large Arabidopsis thaliana gene families are homologous to the Brassica gene superfamily that encodes pollen coat proteins and the male component of the self-incompatibility response.</title>
        <authorList>
            <person name="Vanoosthuyse V."/>
            <person name="Miege C."/>
            <person name="Dumas C."/>
            <person name="Cock J.M."/>
        </authorList>
    </citation>
    <scope>IDENTIFICATION</scope>
    <scope>TISSUE SPECIFICITY</scope>
</reference>
<reference key="4">
    <citation type="journal article" date="2005" name="Plant Physiol.">
        <title>Genome organization of more than 300 defensin-like genes in Arabidopsis.</title>
        <authorList>
            <person name="Silverstein K.A.T."/>
            <person name="Graham M.A."/>
            <person name="Paape T.D."/>
            <person name="VandenBosch K.A."/>
        </authorList>
    </citation>
    <scope>GENE FAMILY</scope>
</reference>
<dbReference type="EMBL" id="AL035678">
    <property type="status" value="NOT_ANNOTATED_CDS"/>
    <property type="molecule type" value="Genomic_DNA"/>
</dbReference>
<dbReference type="EMBL" id="AL161583">
    <property type="status" value="NOT_ANNOTATED_CDS"/>
    <property type="molecule type" value="Genomic_DNA"/>
</dbReference>
<dbReference type="EMBL" id="CP002687">
    <property type="protein sequence ID" value="AEE86228.1"/>
    <property type="molecule type" value="Genomic_DNA"/>
</dbReference>
<dbReference type="RefSeq" id="NP_001031783.1">
    <property type="nucleotide sequence ID" value="NM_001036706.2"/>
</dbReference>
<dbReference type="SMR" id="P82641"/>
<dbReference type="PaxDb" id="3702-AT4G33465.1"/>
<dbReference type="EnsemblPlants" id="AT4G33465.1">
    <property type="protein sequence ID" value="AT4G33465.1"/>
    <property type="gene ID" value="AT4G33465"/>
</dbReference>
<dbReference type="GeneID" id="3770579"/>
<dbReference type="Gramene" id="AT4G33465.1">
    <property type="protein sequence ID" value="AT4G33465.1"/>
    <property type="gene ID" value="AT4G33465"/>
</dbReference>
<dbReference type="KEGG" id="ath:AT4G33465"/>
<dbReference type="Araport" id="AT4G33465"/>
<dbReference type="TAIR" id="AT4G33465">
    <property type="gene designation" value="SCRL22"/>
</dbReference>
<dbReference type="HOGENOM" id="CLU_174283_0_0_1"/>
<dbReference type="InParanoid" id="P82641"/>
<dbReference type="OMA" id="NPYECNS"/>
<dbReference type="PhylomeDB" id="P82641"/>
<dbReference type="PRO" id="PR:P82641"/>
<dbReference type="Proteomes" id="UP000006548">
    <property type="component" value="Chromosome 4"/>
</dbReference>
<dbReference type="ExpressionAtlas" id="P82641">
    <property type="expression patterns" value="baseline and differential"/>
</dbReference>
<dbReference type="GO" id="GO:0005576">
    <property type="term" value="C:extracellular region"/>
    <property type="evidence" value="ECO:0007669"/>
    <property type="project" value="UniProtKB-SubCell"/>
</dbReference>
<dbReference type="GO" id="GO:0050832">
    <property type="term" value="P:defense response to fungus"/>
    <property type="evidence" value="ECO:0007669"/>
    <property type="project" value="UniProtKB-KW"/>
</dbReference>
<dbReference type="GO" id="GO:0031640">
    <property type="term" value="P:killing of cells of another organism"/>
    <property type="evidence" value="ECO:0007669"/>
    <property type="project" value="UniProtKB-KW"/>
</dbReference>
<dbReference type="GO" id="GO:0007165">
    <property type="term" value="P:signal transduction"/>
    <property type="evidence" value="ECO:0007669"/>
    <property type="project" value="InterPro"/>
</dbReference>
<dbReference type="InterPro" id="IPR010682">
    <property type="entry name" value="SCRL"/>
</dbReference>
<dbReference type="PANTHER" id="PTHR34450:SF8">
    <property type="entry name" value="DEFENSIN-LIKE PROTEIN 232-RELATED"/>
    <property type="match status" value="1"/>
</dbReference>
<dbReference type="PANTHER" id="PTHR34450">
    <property type="entry name" value="DEFENSIN-LIKE PROTEIN 245-RELATED"/>
    <property type="match status" value="1"/>
</dbReference>
<dbReference type="Pfam" id="PF06876">
    <property type="entry name" value="SCRL"/>
    <property type="match status" value="1"/>
</dbReference>
<evidence type="ECO:0000250" key="1"/>
<evidence type="ECO:0000255" key="2"/>
<evidence type="ECO:0000269" key="3">
    <source>
    </source>
</evidence>
<evidence type="ECO:0000305" key="4"/>
<proteinExistence type="evidence at transcript level"/>
<feature type="signal peptide" evidence="2">
    <location>
        <begin position="1"/>
        <end position="28"/>
    </location>
</feature>
<feature type="chain" id="PRO_0000031948" description="Putative defensin-like protein 233">
    <location>
        <begin position="29"/>
        <end position="98"/>
    </location>
</feature>
<feature type="disulfide bond" evidence="1">
    <location>
        <begin position="35"/>
        <end position="96"/>
    </location>
</feature>
<feature type="disulfide bond" evidence="1">
    <location>
        <begin position="45"/>
        <end position="70"/>
    </location>
</feature>
<feature type="disulfide bond" evidence="1">
    <location>
        <begin position="53"/>
        <end position="86"/>
    </location>
</feature>
<feature type="disulfide bond" evidence="1">
    <location>
        <begin position="68"/>
        <end position="88"/>
    </location>
</feature>
<accession>P82641</accession>
<comment type="subcellular location">
    <subcellularLocation>
        <location evidence="1">Secreted</location>
    </subcellularLocation>
</comment>
<comment type="tissue specificity">
    <text evidence="3">Expressed at least in stem, root, rosette leaves and flower buds.</text>
</comment>
<comment type="similarity">
    <text evidence="4">Belongs to the DEFL family.</text>
</comment>
<name>DF233_ARATH</name>
<gene>
    <name type="primary">SCRL22</name>
    <name type="ordered locus">At4g33465</name>
    <name type="ORF">F17M5</name>
</gene>
<sequence length="98" mass="11179">MGMWCTTLFMVSCVSICLILSHVQEVEAGAPPQDCWNLVTFPAKCGIHGKKKCFKEMESKYQQRFLQCTCKNLKPEPKSPKDEHDCTCQRANPYECNS</sequence>
<protein>
    <recommendedName>
        <fullName>Putative defensin-like protein 233</fullName>
    </recommendedName>
    <alternativeName>
        <fullName>Putative S locus cysteine-rich-like protein 22</fullName>
        <shortName>Protein SCRL22</shortName>
        <shortName>SCR-like protein 22</shortName>
    </alternativeName>
</protein>
<organism evidence="4">
    <name type="scientific">Arabidopsis thaliana</name>
    <name type="common">Mouse-ear cress</name>
    <dbReference type="NCBI Taxonomy" id="3702"/>
    <lineage>
        <taxon>Eukaryota</taxon>
        <taxon>Viridiplantae</taxon>
        <taxon>Streptophyta</taxon>
        <taxon>Embryophyta</taxon>
        <taxon>Tracheophyta</taxon>
        <taxon>Spermatophyta</taxon>
        <taxon>Magnoliopsida</taxon>
        <taxon>eudicotyledons</taxon>
        <taxon>Gunneridae</taxon>
        <taxon>Pentapetalae</taxon>
        <taxon>rosids</taxon>
        <taxon>malvids</taxon>
        <taxon>Brassicales</taxon>
        <taxon>Brassicaceae</taxon>
        <taxon>Camelineae</taxon>
        <taxon>Arabidopsis</taxon>
    </lineage>
</organism>
<keyword id="KW-0929">Antimicrobial</keyword>
<keyword id="KW-1015">Disulfide bond</keyword>
<keyword id="KW-0295">Fungicide</keyword>
<keyword id="KW-0611">Plant defense</keyword>
<keyword id="KW-1185">Reference proteome</keyword>
<keyword id="KW-0964">Secreted</keyword>
<keyword id="KW-0732">Signal</keyword>